<dbReference type="EC" id="7.1.1.-" evidence="1"/>
<dbReference type="EMBL" id="CP000555">
    <property type="protein sequence ID" value="ABM94373.1"/>
    <property type="molecule type" value="Genomic_DNA"/>
</dbReference>
<dbReference type="RefSeq" id="WP_011829010.1">
    <property type="nucleotide sequence ID" value="NC_008825.1"/>
</dbReference>
<dbReference type="SMR" id="A2SFN4"/>
<dbReference type="STRING" id="420662.Mpe_A1411"/>
<dbReference type="KEGG" id="mpt:Mpe_A1411"/>
<dbReference type="eggNOG" id="COG1143">
    <property type="taxonomic scope" value="Bacteria"/>
</dbReference>
<dbReference type="HOGENOM" id="CLU_067218_5_1_4"/>
<dbReference type="Proteomes" id="UP000000366">
    <property type="component" value="Chromosome"/>
</dbReference>
<dbReference type="GO" id="GO:0005886">
    <property type="term" value="C:plasma membrane"/>
    <property type="evidence" value="ECO:0007669"/>
    <property type="project" value="UniProtKB-SubCell"/>
</dbReference>
<dbReference type="GO" id="GO:0051539">
    <property type="term" value="F:4 iron, 4 sulfur cluster binding"/>
    <property type="evidence" value="ECO:0007669"/>
    <property type="project" value="UniProtKB-KW"/>
</dbReference>
<dbReference type="GO" id="GO:0005506">
    <property type="term" value="F:iron ion binding"/>
    <property type="evidence" value="ECO:0007669"/>
    <property type="project" value="UniProtKB-UniRule"/>
</dbReference>
<dbReference type="GO" id="GO:0050136">
    <property type="term" value="F:NADH:ubiquinone reductase (non-electrogenic) activity"/>
    <property type="evidence" value="ECO:0007669"/>
    <property type="project" value="UniProtKB-UniRule"/>
</dbReference>
<dbReference type="GO" id="GO:0048038">
    <property type="term" value="F:quinone binding"/>
    <property type="evidence" value="ECO:0007669"/>
    <property type="project" value="UniProtKB-KW"/>
</dbReference>
<dbReference type="GO" id="GO:0009060">
    <property type="term" value="P:aerobic respiration"/>
    <property type="evidence" value="ECO:0007669"/>
    <property type="project" value="TreeGrafter"/>
</dbReference>
<dbReference type="FunFam" id="3.30.70.3270:FF:000003">
    <property type="entry name" value="NADH-quinone oxidoreductase subunit I"/>
    <property type="match status" value="1"/>
</dbReference>
<dbReference type="Gene3D" id="3.30.70.3270">
    <property type="match status" value="1"/>
</dbReference>
<dbReference type="HAMAP" id="MF_01351">
    <property type="entry name" value="NDH1_NuoI"/>
    <property type="match status" value="1"/>
</dbReference>
<dbReference type="InterPro" id="IPR017896">
    <property type="entry name" value="4Fe4S_Fe-S-bd"/>
</dbReference>
<dbReference type="InterPro" id="IPR017900">
    <property type="entry name" value="4Fe4S_Fe_S_CS"/>
</dbReference>
<dbReference type="InterPro" id="IPR010226">
    <property type="entry name" value="NADH_quinone_OxRdtase_chainI"/>
</dbReference>
<dbReference type="NCBIfam" id="TIGR01971">
    <property type="entry name" value="NuoI"/>
    <property type="match status" value="1"/>
</dbReference>
<dbReference type="NCBIfam" id="NF004538">
    <property type="entry name" value="PRK05888.1-4"/>
    <property type="match status" value="1"/>
</dbReference>
<dbReference type="NCBIfam" id="NF004539">
    <property type="entry name" value="PRK05888.1-5"/>
    <property type="match status" value="1"/>
</dbReference>
<dbReference type="PANTHER" id="PTHR10849:SF20">
    <property type="entry name" value="NADH DEHYDROGENASE [UBIQUINONE] IRON-SULFUR PROTEIN 8, MITOCHONDRIAL"/>
    <property type="match status" value="1"/>
</dbReference>
<dbReference type="PANTHER" id="PTHR10849">
    <property type="entry name" value="NADH DEHYDROGENASE UBIQUINONE IRON-SULFUR PROTEIN 8, MITOCHONDRIAL"/>
    <property type="match status" value="1"/>
</dbReference>
<dbReference type="Pfam" id="PF12838">
    <property type="entry name" value="Fer4_7"/>
    <property type="match status" value="1"/>
</dbReference>
<dbReference type="SUPFAM" id="SSF54862">
    <property type="entry name" value="4Fe-4S ferredoxins"/>
    <property type="match status" value="1"/>
</dbReference>
<dbReference type="PROSITE" id="PS00198">
    <property type="entry name" value="4FE4S_FER_1"/>
    <property type="match status" value="2"/>
</dbReference>
<dbReference type="PROSITE" id="PS51379">
    <property type="entry name" value="4FE4S_FER_2"/>
    <property type="match status" value="2"/>
</dbReference>
<evidence type="ECO:0000255" key="1">
    <source>
        <dbReference type="HAMAP-Rule" id="MF_01351"/>
    </source>
</evidence>
<keyword id="KW-0004">4Fe-4S</keyword>
<keyword id="KW-0997">Cell inner membrane</keyword>
<keyword id="KW-1003">Cell membrane</keyword>
<keyword id="KW-0408">Iron</keyword>
<keyword id="KW-0411">Iron-sulfur</keyword>
<keyword id="KW-0472">Membrane</keyword>
<keyword id="KW-0479">Metal-binding</keyword>
<keyword id="KW-0520">NAD</keyword>
<keyword id="KW-0874">Quinone</keyword>
<keyword id="KW-1185">Reference proteome</keyword>
<keyword id="KW-0677">Repeat</keyword>
<keyword id="KW-1278">Translocase</keyword>
<keyword id="KW-0830">Ubiquinone</keyword>
<protein>
    <recommendedName>
        <fullName evidence="1">NADH-quinone oxidoreductase subunit I</fullName>
        <ecNumber evidence="1">7.1.1.-</ecNumber>
    </recommendedName>
    <alternativeName>
        <fullName evidence="1">NADH dehydrogenase I subunit I</fullName>
    </alternativeName>
    <alternativeName>
        <fullName evidence="1">NDH-1 subunit I</fullName>
    </alternativeName>
</protein>
<proteinExistence type="inferred from homology"/>
<reference key="1">
    <citation type="journal article" date="2007" name="J. Bacteriol.">
        <title>Whole-genome analysis of the methyl tert-butyl ether-degrading beta-proteobacterium Methylibium petroleiphilum PM1.</title>
        <authorList>
            <person name="Kane S.R."/>
            <person name="Chakicherla A.Y."/>
            <person name="Chain P.S.G."/>
            <person name="Schmidt R."/>
            <person name="Shin M.W."/>
            <person name="Legler T.C."/>
            <person name="Scow K.M."/>
            <person name="Larimer F.W."/>
            <person name="Lucas S.M."/>
            <person name="Richardson P.M."/>
            <person name="Hristova K.R."/>
        </authorList>
    </citation>
    <scope>NUCLEOTIDE SEQUENCE [LARGE SCALE GENOMIC DNA]</scope>
    <source>
        <strain>ATCC BAA-1232 / LMG 22953 / PM1</strain>
    </source>
</reference>
<gene>
    <name evidence="1" type="primary">nuoI</name>
    <name type="ordered locus">Mpe_A1411</name>
</gene>
<accession>A2SFN4</accession>
<organism>
    <name type="scientific">Methylibium petroleiphilum (strain ATCC BAA-1232 / LMG 22953 / PM1)</name>
    <dbReference type="NCBI Taxonomy" id="420662"/>
    <lineage>
        <taxon>Bacteria</taxon>
        <taxon>Pseudomonadati</taxon>
        <taxon>Pseudomonadota</taxon>
        <taxon>Betaproteobacteria</taxon>
        <taxon>Burkholderiales</taxon>
        <taxon>Sphaerotilaceae</taxon>
        <taxon>Methylibium</taxon>
    </lineage>
</organism>
<feature type="chain" id="PRO_0000298510" description="NADH-quinone oxidoreductase subunit I">
    <location>
        <begin position="1"/>
        <end position="165"/>
    </location>
</feature>
<feature type="domain" description="4Fe-4S ferredoxin-type 1" evidence="1">
    <location>
        <begin position="57"/>
        <end position="86"/>
    </location>
</feature>
<feature type="domain" description="4Fe-4S ferredoxin-type 2" evidence="1">
    <location>
        <begin position="96"/>
        <end position="125"/>
    </location>
</feature>
<feature type="binding site" evidence="1">
    <location>
        <position position="66"/>
    </location>
    <ligand>
        <name>[4Fe-4S] cluster</name>
        <dbReference type="ChEBI" id="CHEBI:49883"/>
        <label>1</label>
    </ligand>
</feature>
<feature type="binding site" evidence="1">
    <location>
        <position position="69"/>
    </location>
    <ligand>
        <name>[4Fe-4S] cluster</name>
        <dbReference type="ChEBI" id="CHEBI:49883"/>
        <label>1</label>
    </ligand>
</feature>
<feature type="binding site" evidence="1">
    <location>
        <position position="72"/>
    </location>
    <ligand>
        <name>[4Fe-4S] cluster</name>
        <dbReference type="ChEBI" id="CHEBI:49883"/>
        <label>1</label>
    </ligand>
</feature>
<feature type="binding site" evidence="1">
    <location>
        <position position="76"/>
    </location>
    <ligand>
        <name>[4Fe-4S] cluster</name>
        <dbReference type="ChEBI" id="CHEBI:49883"/>
        <label>2</label>
    </ligand>
</feature>
<feature type="binding site" evidence="1">
    <location>
        <position position="105"/>
    </location>
    <ligand>
        <name>[4Fe-4S] cluster</name>
        <dbReference type="ChEBI" id="CHEBI:49883"/>
        <label>2</label>
    </ligand>
</feature>
<feature type="binding site" evidence="1">
    <location>
        <position position="108"/>
    </location>
    <ligand>
        <name>[4Fe-4S] cluster</name>
        <dbReference type="ChEBI" id="CHEBI:49883"/>
        <label>2</label>
    </ligand>
</feature>
<feature type="binding site" evidence="1">
    <location>
        <position position="111"/>
    </location>
    <ligand>
        <name>[4Fe-4S] cluster</name>
        <dbReference type="ChEBI" id="CHEBI:49883"/>
        <label>2</label>
    </ligand>
</feature>
<feature type="binding site" evidence="1">
    <location>
        <position position="115"/>
    </location>
    <ligand>
        <name>[4Fe-4S] cluster</name>
        <dbReference type="ChEBI" id="CHEBI:49883"/>
        <label>1</label>
    </ligand>
</feature>
<name>NUOI_METPP</name>
<comment type="function">
    <text evidence="1">NDH-1 shuttles electrons from NADH, via FMN and iron-sulfur (Fe-S) centers, to quinones in the respiratory chain. The immediate electron acceptor for the enzyme in this species is believed to be ubiquinone. Couples the redox reaction to proton translocation (for every two electrons transferred, four hydrogen ions are translocated across the cytoplasmic membrane), and thus conserves the redox energy in a proton gradient.</text>
</comment>
<comment type="catalytic activity">
    <reaction evidence="1">
        <text>a quinone + NADH + 5 H(+)(in) = a quinol + NAD(+) + 4 H(+)(out)</text>
        <dbReference type="Rhea" id="RHEA:57888"/>
        <dbReference type="ChEBI" id="CHEBI:15378"/>
        <dbReference type="ChEBI" id="CHEBI:24646"/>
        <dbReference type="ChEBI" id="CHEBI:57540"/>
        <dbReference type="ChEBI" id="CHEBI:57945"/>
        <dbReference type="ChEBI" id="CHEBI:132124"/>
    </reaction>
</comment>
<comment type="cofactor">
    <cofactor evidence="1">
        <name>[4Fe-4S] cluster</name>
        <dbReference type="ChEBI" id="CHEBI:49883"/>
    </cofactor>
    <text evidence="1">Binds 2 [4Fe-4S] clusters per subunit.</text>
</comment>
<comment type="subunit">
    <text evidence="1">NDH-1 is composed of 14 different subunits. Subunits NuoA, H, J, K, L, M, N constitute the membrane sector of the complex.</text>
</comment>
<comment type="subcellular location">
    <subcellularLocation>
        <location evidence="1">Cell inner membrane</location>
        <topology evidence="1">Peripheral membrane protein</topology>
    </subcellularLocation>
</comment>
<comment type="similarity">
    <text evidence="1">Belongs to the complex I 23 kDa subunit family.</text>
</comment>
<sequence length="165" mass="18834">MSAVASIKEFFNTFFLLELLKGMKLTGRHFLSPAITVQFPEEKTPLSPRFRGLHALRRYENGEERCIACKLCEAVCPALAITIESEVRDDGSRRTTRYDIDLTKCIFCGFCEESCPVDSIVETHIFEYHGEKRGDLYFTKDMLLAVGDRYENEIAANKEADAAYR</sequence>